<comment type="function">
    <text evidence="1">Catalyzes the specific phosphorylation of 1,6-anhydro-N-acetylmuramic acid (anhMurNAc) with the simultaneous cleavage of the 1,6-anhydro ring, generating MurNAc-6-P. Is required for the utilization of anhMurNAc either imported from the medium or derived from its own cell wall murein, and thus plays a role in cell wall recycling.</text>
</comment>
<comment type="catalytic activity">
    <reaction evidence="1">
        <text>1,6-anhydro-N-acetyl-beta-muramate + ATP + H2O = N-acetyl-D-muramate 6-phosphate + ADP + H(+)</text>
        <dbReference type="Rhea" id="RHEA:24952"/>
        <dbReference type="ChEBI" id="CHEBI:15377"/>
        <dbReference type="ChEBI" id="CHEBI:15378"/>
        <dbReference type="ChEBI" id="CHEBI:30616"/>
        <dbReference type="ChEBI" id="CHEBI:58690"/>
        <dbReference type="ChEBI" id="CHEBI:58722"/>
        <dbReference type="ChEBI" id="CHEBI:456216"/>
        <dbReference type="EC" id="2.7.1.170"/>
    </reaction>
</comment>
<comment type="pathway">
    <text evidence="1">Amino-sugar metabolism; 1,6-anhydro-N-acetylmuramate degradation.</text>
</comment>
<comment type="pathway">
    <text evidence="1">Cell wall biogenesis; peptidoglycan recycling.</text>
</comment>
<comment type="similarity">
    <text evidence="1">Belongs to the anhydro-N-acetylmuramic acid kinase family.</text>
</comment>
<evidence type="ECO:0000255" key="1">
    <source>
        <dbReference type="HAMAP-Rule" id="MF_01270"/>
    </source>
</evidence>
<feature type="chain" id="PRO_1000165166" description="Anhydro-N-acetylmuramic acid kinase">
    <location>
        <begin position="1"/>
        <end position="374"/>
    </location>
</feature>
<feature type="binding site" evidence="1">
    <location>
        <begin position="9"/>
        <end position="16"/>
    </location>
    <ligand>
        <name>ATP</name>
        <dbReference type="ChEBI" id="CHEBI:30616"/>
    </ligand>
</feature>
<dbReference type="EC" id="2.7.1.170" evidence="1"/>
<dbReference type="EMBL" id="CP001349">
    <property type="protein sequence ID" value="ACL56861.1"/>
    <property type="molecule type" value="Genomic_DNA"/>
</dbReference>
<dbReference type="SMR" id="B8IS49"/>
<dbReference type="STRING" id="460265.Mnod_1871"/>
<dbReference type="KEGG" id="mno:Mnod_1871"/>
<dbReference type="eggNOG" id="COG2377">
    <property type="taxonomic scope" value="Bacteria"/>
</dbReference>
<dbReference type="HOGENOM" id="CLU_038782_3_0_5"/>
<dbReference type="UniPathway" id="UPA00343"/>
<dbReference type="UniPathway" id="UPA00544"/>
<dbReference type="Proteomes" id="UP000008207">
    <property type="component" value="Chromosome"/>
</dbReference>
<dbReference type="GO" id="GO:0005524">
    <property type="term" value="F:ATP binding"/>
    <property type="evidence" value="ECO:0007669"/>
    <property type="project" value="UniProtKB-UniRule"/>
</dbReference>
<dbReference type="GO" id="GO:0016301">
    <property type="term" value="F:kinase activity"/>
    <property type="evidence" value="ECO:0007669"/>
    <property type="project" value="UniProtKB-KW"/>
</dbReference>
<dbReference type="GO" id="GO:0016773">
    <property type="term" value="F:phosphotransferase activity, alcohol group as acceptor"/>
    <property type="evidence" value="ECO:0007669"/>
    <property type="project" value="UniProtKB-UniRule"/>
</dbReference>
<dbReference type="GO" id="GO:0097175">
    <property type="term" value="P:1,6-anhydro-N-acetyl-beta-muramic acid catabolic process"/>
    <property type="evidence" value="ECO:0007669"/>
    <property type="project" value="UniProtKB-UniRule"/>
</dbReference>
<dbReference type="GO" id="GO:0006040">
    <property type="term" value="P:amino sugar metabolic process"/>
    <property type="evidence" value="ECO:0007669"/>
    <property type="project" value="InterPro"/>
</dbReference>
<dbReference type="GO" id="GO:0009254">
    <property type="term" value="P:peptidoglycan turnover"/>
    <property type="evidence" value="ECO:0007669"/>
    <property type="project" value="UniProtKB-UniRule"/>
</dbReference>
<dbReference type="CDD" id="cd24050">
    <property type="entry name" value="ASKHA_NBD_ANMK"/>
    <property type="match status" value="1"/>
</dbReference>
<dbReference type="Gene3D" id="3.30.420.40">
    <property type="match status" value="2"/>
</dbReference>
<dbReference type="HAMAP" id="MF_01270">
    <property type="entry name" value="AnhMurNAc_kinase"/>
    <property type="match status" value="1"/>
</dbReference>
<dbReference type="InterPro" id="IPR005338">
    <property type="entry name" value="Anhydro_N_Ac-Mur_kinase"/>
</dbReference>
<dbReference type="InterPro" id="IPR043129">
    <property type="entry name" value="ATPase_NBD"/>
</dbReference>
<dbReference type="NCBIfam" id="NF007141">
    <property type="entry name" value="PRK09585.1-5"/>
    <property type="match status" value="1"/>
</dbReference>
<dbReference type="PANTHER" id="PTHR30605">
    <property type="entry name" value="ANHYDRO-N-ACETYLMURAMIC ACID KINASE"/>
    <property type="match status" value="1"/>
</dbReference>
<dbReference type="PANTHER" id="PTHR30605:SF0">
    <property type="entry name" value="ANHYDRO-N-ACETYLMURAMIC ACID KINASE"/>
    <property type="match status" value="1"/>
</dbReference>
<dbReference type="Pfam" id="PF03702">
    <property type="entry name" value="AnmK"/>
    <property type="match status" value="1"/>
</dbReference>
<dbReference type="SUPFAM" id="SSF53067">
    <property type="entry name" value="Actin-like ATPase domain"/>
    <property type="match status" value="1"/>
</dbReference>
<reference key="1">
    <citation type="submission" date="2009-01" db="EMBL/GenBank/DDBJ databases">
        <title>Complete sequence of chromosome of Methylobacterium nodulans ORS 2060.</title>
        <authorList>
            <consortium name="US DOE Joint Genome Institute"/>
            <person name="Lucas S."/>
            <person name="Copeland A."/>
            <person name="Lapidus A."/>
            <person name="Glavina del Rio T."/>
            <person name="Dalin E."/>
            <person name="Tice H."/>
            <person name="Bruce D."/>
            <person name="Goodwin L."/>
            <person name="Pitluck S."/>
            <person name="Sims D."/>
            <person name="Brettin T."/>
            <person name="Detter J.C."/>
            <person name="Han C."/>
            <person name="Larimer F."/>
            <person name="Land M."/>
            <person name="Hauser L."/>
            <person name="Kyrpides N."/>
            <person name="Ivanova N."/>
            <person name="Marx C.J."/>
            <person name="Richardson P."/>
        </authorList>
    </citation>
    <scope>NUCLEOTIDE SEQUENCE [LARGE SCALE GENOMIC DNA]</scope>
    <source>
        <strain>LMG 21967 / CNCM I-2342 / ORS 2060</strain>
    </source>
</reference>
<name>ANMK_METNO</name>
<proteinExistence type="inferred from homology"/>
<keyword id="KW-0067">ATP-binding</keyword>
<keyword id="KW-0119">Carbohydrate metabolism</keyword>
<keyword id="KW-0418">Kinase</keyword>
<keyword id="KW-0547">Nucleotide-binding</keyword>
<keyword id="KW-1185">Reference proteome</keyword>
<keyword id="KW-0808">Transferase</keyword>
<gene>
    <name evidence="1" type="primary">anmK</name>
    <name type="ordered locus">Mnod_1871</name>
</gene>
<accession>B8IS49</accession>
<sequence length="374" mass="39823">MRAIGLMSGTSLDGIDVALIESDGETVRVRRGHNGRIGPLGPTGYRAYSDEDRALLRRALAEAEAIAVRTDRPGCLREAEERVTRLHAEAVENFLTENGLTPADIDLIGFHGQTVIHRPGQGLTVQIGDGARLSRHLGIPVVSDFRQADVAAGGQGAPLVPIFHRALARASGFEGSLAILNIGGVANVTLIAGNGDLLAFDTGPGNALIDDWMSERASRPFDARGSTAAAGRPDEALLAWLLVHPYFTRRPPKSLDRNSFSHRLVGPLSTEDGAATLTAFTVRAVARALDFASEPPRRWIVAGGGARNDEMLRLLRHHLRAEVTPADEIGWSSAFLEAQAFAHLAVRAWNGLPITFPSTTGVSAPMTGGVTARP</sequence>
<protein>
    <recommendedName>
        <fullName evidence="1">Anhydro-N-acetylmuramic acid kinase</fullName>
        <ecNumber evidence="1">2.7.1.170</ecNumber>
    </recommendedName>
    <alternativeName>
        <fullName evidence="1">AnhMurNAc kinase</fullName>
    </alternativeName>
</protein>
<organism>
    <name type="scientific">Methylobacterium nodulans (strain LMG 21967 / CNCM I-2342 / ORS 2060)</name>
    <dbReference type="NCBI Taxonomy" id="460265"/>
    <lineage>
        <taxon>Bacteria</taxon>
        <taxon>Pseudomonadati</taxon>
        <taxon>Pseudomonadota</taxon>
        <taxon>Alphaproteobacteria</taxon>
        <taxon>Hyphomicrobiales</taxon>
        <taxon>Methylobacteriaceae</taxon>
        <taxon>Methylobacterium</taxon>
    </lineage>
</organism>